<comment type="similarity">
    <text evidence="5">Belongs to the TRAFAC class myosin-kinesin ATPase superfamily. Kinesin family. KIN-7 subfamily.</text>
</comment>
<comment type="sequence caution" evidence="6">
    <conflict type="erroneous gene model prediction">
        <sequence resource="EMBL-CDS" id="AAD23678"/>
    </conflict>
</comment>
<comment type="sequence caution" evidence="6">
    <conflict type="frameshift">
        <sequence resource="EMBL-CDS" id="BAD93933"/>
    </conflict>
</comment>
<gene>
    <name evidence="6" type="primary">KIN7E</name>
    <name evidence="7" type="ordered locus">At2g21300</name>
    <name evidence="8" type="ORF">F3K23.6</name>
</gene>
<name>KN7E_ARATH</name>
<feature type="chain" id="PRO_0000436463" description="Kinesin-like protein KIN-7E">
    <location>
        <begin position="1"/>
        <end position="862"/>
    </location>
</feature>
<feature type="domain" description="Kinesin motor" evidence="3">
    <location>
        <begin position="24"/>
        <end position="346"/>
    </location>
</feature>
<feature type="region of interest" description="Disordered" evidence="4">
    <location>
        <begin position="463"/>
        <end position="505"/>
    </location>
</feature>
<feature type="region of interest" description="Disordered" evidence="4">
    <location>
        <begin position="542"/>
        <end position="632"/>
    </location>
</feature>
<feature type="coiled-coil region" evidence="2">
    <location>
        <begin position="355"/>
        <end position="428"/>
    </location>
</feature>
<feature type="compositionally biased region" description="Polar residues" evidence="4">
    <location>
        <begin position="465"/>
        <end position="476"/>
    </location>
</feature>
<feature type="compositionally biased region" description="Basic and acidic residues" evidence="4">
    <location>
        <begin position="494"/>
        <end position="505"/>
    </location>
</feature>
<feature type="compositionally biased region" description="Polar residues" evidence="4">
    <location>
        <begin position="612"/>
        <end position="621"/>
    </location>
</feature>
<feature type="binding site" evidence="3">
    <location>
        <begin position="110"/>
        <end position="117"/>
    </location>
    <ligand>
        <name>ATP</name>
        <dbReference type="ChEBI" id="CHEBI:30616"/>
    </ligand>
</feature>
<feature type="cross-link" description="Glycyl lysine isopeptide (Lys-Gly) (interchain with G-Cter in ubiquitin)" evidence="1">
    <location>
        <position position="734"/>
    </location>
</feature>
<sequence length="862" mass="96671">MGAIAGEELKKMEKTQVHVAREEKILVLVRLRPLNEKEILANEAADWECINDTTVLYRNTLREGSTFPSAYSFDRVYRGECPTRQVYEDGPKEVALSVVKGINSSIFAYGQTSSGKTYTMSGITEFAVADIFDYIFKHEDRAFVVKFSAIEIYNEAIRDLLSPDSTPLRLRDDPEKGAAVEKATEETLRDWNHLKELISVCEAQRKIGETSLNERSSRSHQIIKLTVESSAREFLGKENSTTLMASVNFIDLAGSERASQALSAGARLKEGCHINRSLLTLGTVIRKLSNGRQGHINYRDSKLTRILQPCLGGNARTAIVCTLSPARSHVEQTRNTLLFACCAKEVTTKAQINVVMSDKALVKQLQRELARLESELRNPAPATSSCDCGVTLRKKDLQIQKMEKQLAEMTKQRDIAQSRLEDFMKMVEHDASSKAGTPHFRNRTNKWEDGSVSEISGVVDPDRTSFISDGTSTPLSTARAHVRSHSDDDLEEEMSPRHSGDQSEEYCKEVQCIEMEESTRDINNDSEERTDAETLLGHNAEANGETGSAQHRIPSSVRSVRRRKSWSRGDTMTGTSTPPDALETDYRGRPEGHGFAFPDLEFGSGGKLLRNDSMTSRGSDSTEAHSIGTPLVGEEGGITSIRSFVEGLKEMVSDPENSGKMRKDIGVDAMEEEVSGTMTNWSEEFERQREQILGLWQTCHVSLVHRTYFFLLFTGDQADSIYIGVELRRLSFMKESFSQGNHAFERGQTLTIASSLKALHRERRMLSKLVGKRFTGEERKRLYQKFGIAVNSKRRRLQLANQLWSKPNDITHAVESAAVVAKLVRFVEQGRAMKEMFGLSFTPPLPTTRRSLNWRKSMATLF</sequence>
<accession>F4IGL2</accession>
<accession>Q56YQ6</accession>
<accession>Q9SJU7</accession>
<keyword id="KW-0067">ATP-binding</keyword>
<keyword id="KW-0175">Coiled coil</keyword>
<keyword id="KW-1017">Isopeptide bond</keyword>
<keyword id="KW-0493">Microtubule</keyword>
<keyword id="KW-0505">Motor protein</keyword>
<keyword id="KW-0547">Nucleotide-binding</keyword>
<keyword id="KW-1185">Reference proteome</keyword>
<keyword id="KW-0832">Ubl conjugation</keyword>
<protein>
    <recommendedName>
        <fullName evidence="6">Kinesin-like protein KIN-7E</fullName>
    </recommendedName>
</protein>
<evidence type="ECO:0000250" key="1">
    <source>
        <dbReference type="UniProtKB" id="F4JQ51"/>
    </source>
</evidence>
<evidence type="ECO:0000255" key="2"/>
<evidence type="ECO:0000255" key="3">
    <source>
        <dbReference type="PROSITE-ProRule" id="PRU00283"/>
    </source>
</evidence>
<evidence type="ECO:0000256" key="4">
    <source>
        <dbReference type="SAM" id="MobiDB-lite"/>
    </source>
</evidence>
<evidence type="ECO:0000303" key="5">
    <source>
    </source>
</evidence>
<evidence type="ECO:0000305" key="6"/>
<evidence type="ECO:0000312" key="7">
    <source>
        <dbReference type="Araport" id="AT2G21300"/>
    </source>
</evidence>
<evidence type="ECO:0000312" key="8">
    <source>
        <dbReference type="EMBL" id="AAD23678.1"/>
    </source>
</evidence>
<dbReference type="EMBL" id="AC006841">
    <property type="protein sequence ID" value="AAD23678.1"/>
    <property type="status" value="ALT_SEQ"/>
    <property type="molecule type" value="Genomic_DNA"/>
</dbReference>
<dbReference type="EMBL" id="CP002685">
    <property type="protein sequence ID" value="AEC07157.1"/>
    <property type="molecule type" value="Genomic_DNA"/>
</dbReference>
<dbReference type="EMBL" id="CP002685">
    <property type="protein sequence ID" value="AEC07158.1"/>
    <property type="molecule type" value="Genomic_DNA"/>
</dbReference>
<dbReference type="EMBL" id="CP002685">
    <property type="protein sequence ID" value="ANM62417.1"/>
    <property type="molecule type" value="Genomic_DNA"/>
</dbReference>
<dbReference type="EMBL" id="CP002685">
    <property type="protein sequence ID" value="ANM62418.1"/>
    <property type="molecule type" value="Genomic_DNA"/>
</dbReference>
<dbReference type="EMBL" id="CP002685">
    <property type="protein sequence ID" value="ANM62419.1"/>
    <property type="molecule type" value="Genomic_DNA"/>
</dbReference>
<dbReference type="EMBL" id="AK221265">
    <property type="protein sequence ID" value="BAD93933.1"/>
    <property type="status" value="ALT_FRAME"/>
    <property type="molecule type" value="mRNA"/>
</dbReference>
<dbReference type="PIR" id="F84599">
    <property type="entry name" value="F84599"/>
</dbReference>
<dbReference type="RefSeq" id="NP_001031385.1">
    <property type="nucleotide sequence ID" value="NM_001036308.2"/>
</dbReference>
<dbReference type="RefSeq" id="NP_001324575.1">
    <property type="nucleotide sequence ID" value="NM_001335743.1"/>
</dbReference>
<dbReference type="RefSeq" id="NP_001324576.1">
    <property type="nucleotide sequence ID" value="NM_001335742.1"/>
</dbReference>
<dbReference type="RefSeq" id="NP_001324577.1">
    <property type="nucleotide sequence ID" value="NM_001335741.1"/>
</dbReference>
<dbReference type="RefSeq" id="NP_179726.2">
    <property type="nucleotide sequence ID" value="NM_127702.4"/>
</dbReference>
<dbReference type="SMR" id="F4IGL2"/>
<dbReference type="FunCoup" id="F4IGL2">
    <property type="interactions" value="470"/>
</dbReference>
<dbReference type="STRING" id="3702.F4IGL2"/>
<dbReference type="iPTMnet" id="F4IGL2"/>
<dbReference type="PaxDb" id="3702-AT2G21300.1"/>
<dbReference type="ProteomicsDB" id="238204"/>
<dbReference type="EnsemblPlants" id="AT2G21300.1">
    <property type="protein sequence ID" value="AT2G21300.1"/>
    <property type="gene ID" value="AT2G21300"/>
</dbReference>
<dbReference type="EnsemblPlants" id="AT2G21300.2">
    <property type="protein sequence ID" value="AT2G21300.2"/>
    <property type="gene ID" value="AT2G21300"/>
</dbReference>
<dbReference type="EnsemblPlants" id="AT2G21300.3">
    <property type="protein sequence ID" value="AT2G21300.3"/>
    <property type="gene ID" value="AT2G21300"/>
</dbReference>
<dbReference type="EnsemblPlants" id="AT2G21300.4">
    <property type="protein sequence ID" value="AT2G21300.4"/>
    <property type="gene ID" value="AT2G21300"/>
</dbReference>
<dbReference type="EnsemblPlants" id="AT2G21300.5">
    <property type="protein sequence ID" value="AT2G21300.5"/>
    <property type="gene ID" value="AT2G21300"/>
</dbReference>
<dbReference type="GeneID" id="816669"/>
<dbReference type="Gramene" id="AT2G21300.1">
    <property type="protein sequence ID" value="AT2G21300.1"/>
    <property type="gene ID" value="AT2G21300"/>
</dbReference>
<dbReference type="Gramene" id="AT2G21300.2">
    <property type="protein sequence ID" value="AT2G21300.2"/>
    <property type="gene ID" value="AT2G21300"/>
</dbReference>
<dbReference type="Gramene" id="AT2G21300.3">
    <property type="protein sequence ID" value="AT2G21300.3"/>
    <property type="gene ID" value="AT2G21300"/>
</dbReference>
<dbReference type="Gramene" id="AT2G21300.4">
    <property type="protein sequence ID" value="AT2G21300.4"/>
    <property type="gene ID" value="AT2G21300"/>
</dbReference>
<dbReference type="Gramene" id="AT2G21300.5">
    <property type="protein sequence ID" value="AT2G21300.5"/>
    <property type="gene ID" value="AT2G21300"/>
</dbReference>
<dbReference type="KEGG" id="ath:AT2G21300"/>
<dbReference type="Araport" id="AT2G21300"/>
<dbReference type="TAIR" id="AT2G21300"/>
<dbReference type="eggNOG" id="KOG0242">
    <property type="taxonomic scope" value="Eukaryota"/>
</dbReference>
<dbReference type="HOGENOM" id="CLU_013407_1_0_1"/>
<dbReference type="InParanoid" id="F4IGL2"/>
<dbReference type="OMA" id="WETCYIS"/>
<dbReference type="PRO" id="PR:F4IGL2"/>
<dbReference type="Proteomes" id="UP000006548">
    <property type="component" value="Chromosome 2"/>
</dbReference>
<dbReference type="ExpressionAtlas" id="F4IGL2">
    <property type="expression patterns" value="baseline and differential"/>
</dbReference>
<dbReference type="GO" id="GO:0005874">
    <property type="term" value="C:microtubule"/>
    <property type="evidence" value="ECO:0007669"/>
    <property type="project" value="UniProtKB-KW"/>
</dbReference>
<dbReference type="GO" id="GO:0005524">
    <property type="term" value="F:ATP binding"/>
    <property type="evidence" value="ECO:0007669"/>
    <property type="project" value="UniProtKB-KW"/>
</dbReference>
<dbReference type="GO" id="GO:0008017">
    <property type="term" value="F:microtubule binding"/>
    <property type="evidence" value="ECO:0007669"/>
    <property type="project" value="InterPro"/>
</dbReference>
<dbReference type="GO" id="GO:0003777">
    <property type="term" value="F:microtubule motor activity"/>
    <property type="evidence" value="ECO:0007669"/>
    <property type="project" value="InterPro"/>
</dbReference>
<dbReference type="GO" id="GO:0007018">
    <property type="term" value="P:microtubule-based movement"/>
    <property type="evidence" value="ECO:0007669"/>
    <property type="project" value="InterPro"/>
</dbReference>
<dbReference type="CDD" id="cd01374">
    <property type="entry name" value="KISc_CENP_E"/>
    <property type="match status" value="1"/>
</dbReference>
<dbReference type="FunFam" id="3.40.850.10:FF:000016">
    <property type="entry name" value="Kinesin-like protein"/>
    <property type="match status" value="1"/>
</dbReference>
<dbReference type="Gene3D" id="3.40.850.10">
    <property type="entry name" value="Kinesin motor domain"/>
    <property type="match status" value="1"/>
</dbReference>
<dbReference type="InterPro" id="IPR027640">
    <property type="entry name" value="Kinesin-like_fam"/>
</dbReference>
<dbReference type="InterPro" id="IPR019821">
    <property type="entry name" value="Kinesin_motor_CS"/>
</dbReference>
<dbReference type="InterPro" id="IPR001752">
    <property type="entry name" value="Kinesin_motor_dom"/>
</dbReference>
<dbReference type="InterPro" id="IPR036961">
    <property type="entry name" value="Kinesin_motor_dom_sf"/>
</dbReference>
<dbReference type="InterPro" id="IPR021881">
    <property type="entry name" value="NACK_C"/>
</dbReference>
<dbReference type="InterPro" id="IPR027417">
    <property type="entry name" value="P-loop_NTPase"/>
</dbReference>
<dbReference type="PANTHER" id="PTHR47968">
    <property type="entry name" value="CENTROMERE PROTEIN E"/>
    <property type="match status" value="1"/>
</dbReference>
<dbReference type="PANTHER" id="PTHR47968:SF2">
    <property type="entry name" value="KINESIN-LIKE PROTEIN KIN-7E"/>
    <property type="match status" value="1"/>
</dbReference>
<dbReference type="Pfam" id="PF11995">
    <property type="entry name" value="DUF3490"/>
    <property type="match status" value="1"/>
</dbReference>
<dbReference type="Pfam" id="PF00225">
    <property type="entry name" value="Kinesin"/>
    <property type="match status" value="1"/>
</dbReference>
<dbReference type="PRINTS" id="PR00380">
    <property type="entry name" value="KINESINHEAVY"/>
</dbReference>
<dbReference type="SMART" id="SM00129">
    <property type="entry name" value="KISc"/>
    <property type="match status" value="1"/>
</dbReference>
<dbReference type="SUPFAM" id="SSF52540">
    <property type="entry name" value="P-loop containing nucleoside triphosphate hydrolases"/>
    <property type="match status" value="1"/>
</dbReference>
<dbReference type="PROSITE" id="PS00411">
    <property type="entry name" value="KINESIN_MOTOR_1"/>
    <property type="match status" value="1"/>
</dbReference>
<dbReference type="PROSITE" id="PS50067">
    <property type="entry name" value="KINESIN_MOTOR_2"/>
    <property type="match status" value="1"/>
</dbReference>
<organism>
    <name type="scientific">Arabidopsis thaliana</name>
    <name type="common">Mouse-ear cress</name>
    <dbReference type="NCBI Taxonomy" id="3702"/>
    <lineage>
        <taxon>Eukaryota</taxon>
        <taxon>Viridiplantae</taxon>
        <taxon>Streptophyta</taxon>
        <taxon>Embryophyta</taxon>
        <taxon>Tracheophyta</taxon>
        <taxon>Spermatophyta</taxon>
        <taxon>Magnoliopsida</taxon>
        <taxon>eudicotyledons</taxon>
        <taxon>Gunneridae</taxon>
        <taxon>Pentapetalae</taxon>
        <taxon>rosids</taxon>
        <taxon>malvids</taxon>
        <taxon>Brassicales</taxon>
        <taxon>Brassicaceae</taxon>
        <taxon>Camelineae</taxon>
        <taxon>Arabidopsis</taxon>
    </lineage>
</organism>
<proteinExistence type="evidence at transcript level"/>
<reference key="1">
    <citation type="journal article" date="1999" name="Nature">
        <title>Sequence and analysis of chromosome 2 of the plant Arabidopsis thaliana.</title>
        <authorList>
            <person name="Lin X."/>
            <person name="Kaul S."/>
            <person name="Rounsley S.D."/>
            <person name="Shea T.P."/>
            <person name="Benito M.-I."/>
            <person name="Town C.D."/>
            <person name="Fujii C.Y."/>
            <person name="Mason T.M."/>
            <person name="Bowman C.L."/>
            <person name="Barnstead M.E."/>
            <person name="Feldblyum T.V."/>
            <person name="Buell C.R."/>
            <person name="Ketchum K.A."/>
            <person name="Lee J.J."/>
            <person name="Ronning C.M."/>
            <person name="Koo H.L."/>
            <person name="Moffat K.S."/>
            <person name="Cronin L.A."/>
            <person name="Shen M."/>
            <person name="Pai G."/>
            <person name="Van Aken S."/>
            <person name="Umayam L."/>
            <person name="Tallon L.J."/>
            <person name="Gill J.E."/>
            <person name="Adams M.D."/>
            <person name="Carrera A.J."/>
            <person name="Creasy T.H."/>
            <person name="Goodman H.M."/>
            <person name="Somerville C.R."/>
            <person name="Copenhaver G.P."/>
            <person name="Preuss D."/>
            <person name="Nierman W.C."/>
            <person name="White O."/>
            <person name="Eisen J.A."/>
            <person name="Salzberg S.L."/>
            <person name="Fraser C.M."/>
            <person name="Venter J.C."/>
        </authorList>
    </citation>
    <scope>NUCLEOTIDE SEQUENCE [LARGE SCALE GENOMIC DNA]</scope>
    <source>
        <strain>cv. Columbia</strain>
    </source>
</reference>
<reference key="2">
    <citation type="journal article" date="2017" name="Plant J.">
        <title>Araport11: a complete reannotation of the Arabidopsis thaliana reference genome.</title>
        <authorList>
            <person name="Cheng C.Y."/>
            <person name="Krishnakumar V."/>
            <person name="Chan A.P."/>
            <person name="Thibaud-Nissen F."/>
            <person name="Schobel S."/>
            <person name="Town C.D."/>
        </authorList>
    </citation>
    <scope>GENOME REANNOTATION</scope>
    <source>
        <strain>cv. Columbia</strain>
    </source>
</reference>
<reference key="3">
    <citation type="submission" date="2005-03" db="EMBL/GenBank/DDBJ databases">
        <title>Large-scale analysis of RIKEN Arabidopsis full-length (RAFL) cDNAs.</title>
        <authorList>
            <person name="Totoki Y."/>
            <person name="Seki M."/>
            <person name="Ishida J."/>
            <person name="Nakajima M."/>
            <person name="Enju A."/>
            <person name="Kamiya A."/>
            <person name="Narusaka M."/>
            <person name="Shin-i T."/>
            <person name="Nakagawa M."/>
            <person name="Sakamoto N."/>
            <person name="Oishi K."/>
            <person name="Kohara Y."/>
            <person name="Kobayashi M."/>
            <person name="Toyoda A."/>
            <person name="Sakaki Y."/>
            <person name="Sakurai T."/>
            <person name="Iida K."/>
            <person name="Akiyama K."/>
            <person name="Satou M."/>
            <person name="Toyoda T."/>
            <person name="Konagaya A."/>
            <person name="Carninci P."/>
            <person name="Kawai J."/>
            <person name="Hayashizaki Y."/>
            <person name="Shinozaki K."/>
        </authorList>
    </citation>
    <scope>NUCLEOTIDE SEQUENCE [LARGE SCALE MRNA]</scope>
    <source>
        <strain>cv. Columbia</strain>
    </source>
</reference>
<reference key="4">
    <citation type="journal article" date="2001" name="BMC Genomics">
        <title>Kinesins in the Arabidopsis genome: a comparative analysis among eukaryotes.</title>
        <authorList>
            <person name="Reddy A.S."/>
            <person name="Day I.S."/>
        </authorList>
    </citation>
    <scope>GENE FAMILY</scope>
</reference>
<reference key="5">
    <citation type="journal article" date="2006" name="BMC Genomics">
        <title>Comprehensive comparative analysis of kinesins in photosynthetic eukaryotes.</title>
        <authorList>
            <person name="Richardson D.N."/>
            <person name="Simmons M.P."/>
            <person name="Reddy A.S."/>
        </authorList>
    </citation>
    <scope>GENE FAMILY</scope>
    <scope>NOMENCLATURE</scope>
</reference>
<reference key="6">
    <citation type="journal article" date="2012" name="Protoplasma">
        <title>Functions of the Arabidopsis kinesin superfamily of microtubule-based motor proteins.</title>
        <authorList>
            <person name="Zhu C."/>
            <person name="Dixit R."/>
        </authorList>
    </citation>
    <scope>REVIEW</scope>
</reference>